<comment type="similarity">
    <text evidence="1">Belongs to the UPF0251 family.</text>
</comment>
<sequence length="153" mass="17376">MGRPPKCRRVEFIPQCTYFKPAGIPLWNLEEVGLAVEEVEALRLKDLEGLEQEDCAERMGISRPTFQRILTGARSKVAQALVTGRAIRVEGGNFEYVARRLRCTGCRAEWEPDPSDLNEQQCPKCGGKELMTRPERCSRPKRGAGKYRVPKKR</sequence>
<reference key="1">
    <citation type="submission" date="2007-10" db="EMBL/GenBank/DDBJ databases">
        <title>Complete sequence of chromosome of Desulforudis audaxviator MP104C.</title>
        <authorList>
            <person name="Copeland A."/>
            <person name="Lucas S."/>
            <person name="Lapidus A."/>
            <person name="Barry K."/>
            <person name="Glavina del Rio T."/>
            <person name="Dalin E."/>
            <person name="Tice H."/>
            <person name="Bruce D."/>
            <person name="Pitluck S."/>
            <person name="Lowry S.R."/>
            <person name="Larimer F."/>
            <person name="Land M.L."/>
            <person name="Hauser L."/>
            <person name="Kyrpides N."/>
            <person name="Ivanova N.N."/>
            <person name="Richardson P."/>
        </authorList>
    </citation>
    <scope>NUCLEOTIDE SEQUENCE [LARGE SCALE GENOMIC DNA]</scope>
    <source>
        <strain>MP104C</strain>
    </source>
</reference>
<dbReference type="EMBL" id="CP000860">
    <property type="protein sequence ID" value="ACA58658.1"/>
    <property type="molecule type" value="Genomic_DNA"/>
</dbReference>
<dbReference type="RefSeq" id="WP_012301252.1">
    <property type="nucleotide sequence ID" value="NC_010424.1"/>
</dbReference>
<dbReference type="STRING" id="477974.Daud_0090"/>
<dbReference type="KEGG" id="dau:Daud_0090"/>
<dbReference type="eggNOG" id="COG1342">
    <property type="taxonomic scope" value="Bacteria"/>
</dbReference>
<dbReference type="HOGENOM" id="CLU_094511_0_1_9"/>
<dbReference type="OrthoDB" id="280278at2"/>
<dbReference type="Proteomes" id="UP000008544">
    <property type="component" value="Chromosome"/>
</dbReference>
<dbReference type="Gene3D" id="1.10.10.10">
    <property type="entry name" value="Winged helix-like DNA-binding domain superfamily/Winged helix DNA-binding domain"/>
    <property type="match status" value="1"/>
</dbReference>
<dbReference type="HAMAP" id="MF_00674">
    <property type="entry name" value="UPF0251"/>
    <property type="match status" value="1"/>
</dbReference>
<dbReference type="InterPro" id="IPR013324">
    <property type="entry name" value="RNA_pol_sigma_r3/r4-like"/>
</dbReference>
<dbReference type="InterPro" id="IPR002852">
    <property type="entry name" value="UPF0251"/>
</dbReference>
<dbReference type="InterPro" id="IPR036388">
    <property type="entry name" value="WH-like_DNA-bd_sf"/>
</dbReference>
<dbReference type="PANTHER" id="PTHR37478">
    <property type="match status" value="1"/>
</dbReference>
<dbReference type="PANTHER" id="PTHR37478:SF2">
    <property type="entry name" value="UPF0251 PROTEIN TK0562"/>
    <property type="match status" value="1"/>
</dbReference>
<dbReference type="Pfam" id="PF02001">
    <property type="entry name" value="DUF134"/>
    <property type="match status" value="1"/>
</dbReference>
<dbReference type="SUPFAM" id="SSF88659">
    <property type="entry name" value="Sigma3 and sigma4 domains of RNA polymerase sigma factors"/>
    <property type="match status" value="1"/>
</dbReference>
<accession>B1I1P6</accession>
<organism>
    <name type="scientific">Desulforudis audaxviator (strain MP104C)</name>
    <dbReference type="NCBI Taxonomy" id="477974"/>
    <lineage>
        <taxon>Bacteria</taxon>
        <taxon>Bacillati</taxon>
        <taxon>Bacillota</taxon>
        <taxon>Clostridia</taxon>
        <taxon>Thermoanaerobacterales</taxon>
        <taxon>Candidatus Desulforudaceae</taxon>
        <taxon>Candidatus Desulforudis</taxon>
    </lineage>
</organism>
<protein>
    <recommendedName>
        <fullName evidence="1">UPF0251 protein Daud_0090</fullName>
    </recommendedName>
</protein>
<name>Y090_DESAP</name>
<keyword id="KW-1185">Reference proteome</keyword>
<gene>
    <name type="ordered locus">Daud_0090</name>
</gene>
<evidence type="ECO:0000255" key="1">
    <source>
        <dbReference type="HAMAP-Rule" id="MF_00674"/>
    </source>
</evidence>
<evidence type="ECO:0000256" key="2">
    <source>
        <dbReference type="SAM" id="MobiDB-lite"/>
    </source>
</evidence>
<proteinExistence type="inferred from homology"/>
<feature type="chain" id="PRO_1000131579" description="UPF0251 protein Daud_0090">
    <location>
        <begin position="1"/>
        <end position="153"/>
    </location>
</feature>
<feature type="region of interest" description="Disordered" evidence="2">
    <location>
        <begin position="129"/>
        <end position="153"/>
    </location>
</feature>
<feature type="compositionally biased region" description="Basic and acidic residues" evidence="2">
    <location>
        <begin position="129"/>
        <end position="138"/>
    </location>
</feature>
<feature type="compositionally biased region" description="Basic residues" evidence="2">
    <location>
        <begin position="139"/>
        <end position="153"/>
    </location>
</feature>